<feature type="signal peptide" evidence="7">
    <location>
        <begin position="1" status="less than"/>
        <end position="9"/>
    </location>
</feature>
<feature type="propeptide" id="PRO_0000456415" evidence="1">
    <location>
        <begin position="10"/>
        <end position="16"/>
    </location>
</feature>
<feature type="chain" id="PRO_0000456416" description="PI-stichotoxin-Hcr2k" evidence="1">
    <location>
        <begin position="15"/>
        <end position="72"/>
    </location>
</feature>
<feature type="domain" description="BPTI/Kunitz inhibitor" evidence="4">
    <location>
        <begin position="20"/>
        <end position="70"/>
    </location>
</feature>
<feature type="site" description="Reactive bond for trypsin" evidence="3">
    <location>
        <begin position="30"/>
        <end position="31"/>
    </location>
</feature>
<feature type="site" description="Important for the stabilization when complexed with trypsin" evidence="2">
    <location>
        <position position="61"/>
    </location>
</feature>
<feature type="disulfide bond" evidence="4">
    <location>
        <begin position="20"/>
        <end position="70"/>
    </location>
</feature>
<feature type="disulfide bond" evidence="4">
    <location>
        <begin position="29"/>
        <end position="53"/>
    </location>
</feature>
<feature type="disulfide bond" evidence="4">
    <location>
        <begin position="45"/>
        <end position="66"/>
    </location>
</feature>
<feature type="non-terminal residue" evidence="8">
    <location>
        <position position="1"/>
    </location>
</feature>
<gene>
    <name evidence="6" type="primary">iq1c9</name>
</gene>
<name>VKT2K_RADCR</name>
<organism>
    <name type="scientific">Radianthus crispa</name>
    <name type="common">Leathery sea anemone</name>
    <name type="synonym">Heteractis crispa</name>
    <dbReference type="NCBI Taxonomy" id="3122430"/>
    <lineage>
        <taxon>Eukaryota</taxon>
        <taxon>Metazoa</taxon>
        <taxon>Cnidaria</taxon>
        <taxon>Anthozoa</taxon>
        <taxon>Hexacorallia</taxon>
        <taxon>Actiniaria</taxon>
        <taxon>Stichodactylidae</taxon>
        <taxon>Radianthus</taxon>
    </lineage>
</organism>
<reference key="1">
    <citation type="journal article" date="2022" name="Int. J. Mol. Sci.">
        <title>Kunitz-type peptides from sea anemones protect neuronal cells against parkinson's disease inductors via inhibition of ROS production and atp-induced P2X7 receptor activation.</title>
        <authorList>
            <person name="Kvetkina A."/>
            <person name="Pislyagin E."/>
            <person name="Menchinskaya E."/>
            <person name="Yurchenko E."/>
            <person name="Kalina R."/>
            <person name="Kozlovskiy S."/>
            <person name="Kaluzhskiy L."/>
            <person name="Menshov A."/>
            <person name="Kim N."/>
            <person name="Peigneur S."/>
            <person name="Tytgat J."/>
            <person name="Ivanov A."/>
            <person name="Ayvazyan N."/>
            <person name="Leychenko E."/>
            <person name="Aminin D."/>
        </authorList>
    </citation>
    <scope>NUCLEOTIDE SEQUENCE [MRNA]</scope>
    <scope>FUNCTION</scope>
    <scope>RECOMBINANT EXPRESSION</scope>
    <scope>3D-STRUCTURE MODELING IN COMPLEX WITH TRYPSIN</scope>
    <scope>BIOPHYSICOCHEMICAL PROPERTIES</scope>
</reference>
<comment type="function">
    <text evidence="5">Serine protease inhibitor that also shows protective effect in a cytotoxicity model. It inhibits the serine protease trypsin (Ki=630 nM) (PubMed:35563513). It significantly increases neuroblastoma cell viability in an in vitro neurotoxicity model, being a consequence of an effective decrease of reactive oxygen species (ROS) level in the cells (PubMed:35563513). It also seems to protect cells by inhibiting ATP-induced purinoceptor (P2RX7) activation (PubMed:35563513).</text>
</comment>
<comment type="biophysicochemical properties">
    <temperatureDependence>
        <text evidence="5">Optimum temperature is 25 degrees Celsius. The ability to inhibit trypsin slowly decreases as the temperature increases to 70% inhibition at 100 degrees Celsius.</text>
    </temperatureDependence>
</comment>
<comment type="subcellular location">
    <subcellularLocation>
        <location evidence="3">Nematocyst</location>
    </subcellularLocation>
    <subcellularLocation>
        <location evidence="3">Secreted</location>
    </subcellularLocation>
</comment>
<comment type="miscellaneous">
    <text evidence="7">A synonymy between H.magnifica and R.crispa is controversial.</text>
</comment>
<comment type="similarity">
    <text evidence="7">Belongs to the venom Kunitz-type family. Sea anemone type 2 potassium channel toxin subfamily.</text>
</comment>
<accession>A0A6B7FEJ3</accession>
<keyword id="KW-0165">Cleavage on pair of basic residues</keyword>
<keyword id="KW-1015">Disulfide bond</keyword>
<keyword id="KW-0872">Ion channel impairing toxin</keyword>
<keyword id="KW-0166">Nematocyst</keyword>
<keyword id="KW-0646">Protease inhibitor</keyword>
<keyword id="KW-0964">Secreted</keyword>
<keyword id="KW-0722">Serine protease inhibitor</keyword>
<keyword id="KW-0732">Signal</keyword>
<keyword id="KW-0800">Toxin</keyword>
<proteinExistence type="evidence at protein level"/>
<sequence length="72" mass="8233">GFYFRSIQGFYFKRIQGNICSEPKKVGRCRRSFPRFYFDSETGKCTPFIYGGCGGNGNNFETLHACRAICRA</sequence>
<evidence type="ECO:0000250" key="1">
    <source>
        <dbReference type="UniProtKB" id="A0A6B7FBD3"/>
    </source>
</evidence>
<evidence type="ECO:0000250" key="2">
    <source>
        <dbReference type="UniProtKB" id="P0DMJ5"/>
    </source>
</evidence>
<evidence type="ECO:0000250" key="3">
    <source>
        <dbReference type="UniProtKB" id="P31713"/>
    </source>
</evidence>
<evidence type="ECO:0000255" key="4">
    <source>
        <dbReference type="PROSITE-ProRule" id="PRU00031"/>
    </source>
</evidence>
<evidence type="ECO:0000269" key="5">
    <source>
    </source>
</evidence>
<evidence type="ECO:0000303" key="6">
    <source>
    </source>
</evidence>
<evidence type="ECO:0000305" key="7"/>
<evidence type="ECO:0000312" key="8">
    <source>
        <dbReference type="EMBL" id="QBA29487.1"/>
    </source>
</evidence>
<protein>
    <recommendedName>
        <fullName evidence="7">PI-stichotoxin-Hcr2k</fullName>
        <shortName evidence="7">PI-SHTX-Hcr2k</shortName>
    </recommendedName>
    <alternativeName>
        <fullName evidence="6">Kunitz-peptide HCIQ1c9</fullName>
    </alternativeName>
</protein>
<dbReference type="EMBL" id="MH249938">
    <property type="protein sequence ID" value="QBA29487.1"/>
    <property type="molecule type" value="mRNA"/>
</dbReference>
<dbReference type="SMR" id="A0A6B7FEJ3"/>
<dbReference type="GO" id="GO:0005615">
    <property type="term" value="C:extracellular space"/>
    <property type="evidence" value="ECO:0007669"/>
    <property type="project" value="TreeGrafter"/>
</dbReference>
<dbReference type="GO" id="GO:0042151">
    <property type="term" value="C:nematocyst"/>
    <property type="evidence" value="ECO:0007669"/>
    <property type="project" value="UniProtKB-SubCell"/>
</dbReference>
<dbReference type="GO" id="GO:0099106">
    <property type="term" value="F:ion channel regulator activity"/>
    <property type="evidence" value="ECO:0007669"/>
    <property type="project" value="UniProtKB-KW"/>
</dbReference>
<dbReference type="GO" id="GO:0004867">
    <property type="term" value="F:serine-type endopeptidase inhibitor activity"/>
    <property type="evidence" value="ECO:0007669"/>
    <property type="project" value="UniProtKB-KW"/>
</dbReference>
<dbReference type="GO" id="GO:0090729">
    <property type="term" value="F:toxin activity"/>
    <property type="evidence" value="ECO:0007669"/>
    <property type="project" value="UniProtKB-KW"/>
</dbReference>
<dbReference type="CDD" id="cd22618">
    <property type="entry name" value="Kunitz_SHPI"/>
    <property type="match status" value="1"/>
</dbReference>
<dbReference type="FunFam" id="4.10.410.10:FF:000021">
    <property type="entry name" value="Serine protease inhibitor, putative"/>
    <property type="match status" value="1"/>
</dbReference>
<dbReference type="Gene3D" id="4.10.410.10">
    <property type="entry name" value="Pancreatic trypsin inhibitor Kunitz domain"/>
    <property type="match status" value="1"/>
</dbReference>
<dbReference type="InterPro" id="IPR002223">
    <property type="entry name" value="Kunitz_BPTI"/>
</dbReference>
<dbReference type="InterPro" id="IPR036880">
    <property type="entry name" value="Kunitz_BPTI_sf"/>
</dbReference>
<dbReference type="InterPro" id="IPR020901">
    <property type="entry name" value="Prtase_inh_Kunz-CS"/>
</dbReference>
<dbReference type="InterPro" id="IPR050098">
    <property type="entry name" value="TFPI/VKTCI-like"/>
</dbReference>
<dbReference type="PANTHER" id="PTHR10083:SF374">
    <property type="entry name" value="BPTI_KUNITZ INHIBITOR DOMAIN-CONTAINING PROTEIN"/>
    <property type="match status" value="1"/>
</dbReference>
<dbReference type="PANTHER" id="PTHR10083">
    <property type="entry name" value="KUNITZ-TYPE PROTEASE INHIBITOR-RELATED"/>
    <property type="match status" value="1"/>
</dbReference>
<dbReference type="Pfam" id="PF00014">
    <property type="entry name" value="Kunitz_BPTI"/>
    <property type="match status" value="1"/>
</dbReference>
<dbReference type="PRINTS" id="PR00759">
    <property type="entry name" value="BASICPTASE"/>
</dbReference>
<dbReference type="SMART" id="SM00131">
    <property type="entry name" value="KU"/>
    <property type="match status" value="1"/>
</dbReference>
<dbReference type="SUPFAM" id="SSF57362">
    <property type="entry name" value="BPTI-like"/>
    <property type="match status" value="1"/>
</dbReference>
<dbReference type="PROSITE" id="PS00280">
    <property type="entry name" value="BPTI_KUNITZ_1"/>
    <property type="match status" value="1"/>
</dbReference>
<dbReference type="PROSITE" id="PS50279">
    <property type="entry name" value="BPTI_KUNITZ_2"/>
    <property type="match status" value="1"/>
</dbReference>